<dbReference type="EC" id="3.5.2.9" evidence="1"/>
<dbReference type="EMBL" id="CP000479">
    <property type="protein sequence ID" value="ABK67254.1"/>
    <property type="molecule type" value="Genomic_DNA"/>
</dbReference>
<dbReference type="RefSeq" id="WP_011723652.1">
    <property type="nucleotide sequence ID" value="NC_008595.1"/>
</dbReference>
<dbReference type="SMR" id="A0QAC2"/>
<dbReference type="KEGG" id="mav:MAV_0580"/>
<dbReference type="HOGENOM" id="CLU_069535_0_0_11"/>
<dbReference type="Proteomes" id="UP000001574">
    <property type="component" value="Chromosome"/>
</dbReference>
<dbReference type="GO" id="GO:0017168">
    <property type="term" value="F:5-oxoprolinase (ATP-hydrolyzing) activity"/>
    <property type="evidence" value="ECO:0007669"/>
    <property type="project" value="UniProtKB-UniRule"/>
</dbReference>
<dbReference type="GO" id="GO:0005524">
    <property type="term" value="F:ATP binding"/>
    <property type="evidence" value="ECO:0007669"/>
    <property type="project" value="UniProtKB-UniRule"/>
</dbReference>
<dbReference type="GO" id="GO:0005975">
    <property type="term" value="P:carbohydrate metabolic process"/>
    <property type="evidence" value="ECO:0007669"/>
    <property type="project" value="InterPro"/>
</dbReference>
<dbReference type="CDD" id="cd10787">
    <property type="entry name" value="LamB_YcsF_like"/>
    <property type="match status" value="1"/>
</dbReference>
<dbReference type="Gene3D" id="3.20.20.370">
    <property type="entry name" value="Glycoside hydrolase/deacetylase"/>
    <property type="match status" value="1"/>
</dbReference>
<dbReference type="HAMAP" id="MF_00691">
    <property type="entry name" value="PxpA"/>
    <property type="match status" value="1"/>
</dbReference>
<dbReference type="InterPro" id="IPR011330">
    <property type="entry name" value="Glyco_hydro/deAcase_b/a-brl"/>
</dbReference>
<dbReference type="InterPro" id="IPR005501">
    <property type="entry name" value="LamB/YcsF/PxpA-like"/>
</dbReference>
<dbReference type="NCBIfam" id="NF003814">
    <property type="entry name" value="PRK05406.1-3"/>
    <property type="match status" value="1"/>
</dbReference>
<dbReference type="NCBIfam" id="NF003816">
    <property type="entry name" value="PRK05406.1-5"/>
    <property type="match status" value="1"/>
</dbReference>
<dbReference type="PANTHER" id="PTHR30292:SF0">
    <property type="entry name" value="5-OXOPROLINASE SUBUNIT A"/>
    <property type="match status" value="1"/>
</dbReference>
<dbReference type="PANTHER" id="PTHR30292">
    <property type="entry name" value="UNCHARACTERIZED PROTEIN YBGL-RELATED"/>
    <property type="match status" value="1"/>
</dbReference>
<dbReference type="Pfam" id="PF03746">
    <property type="entry name" value="LamB_YcsF"/>
    <property type="match status" value="1"/>
</dbReference>
<dbReference type="SUPFAM" id="SSF88713">
    <property type="entry name" value="Glycoside hydrolase/deacetylase"/>
    <property type="match status" value="1"/>
</dbReference>
<keyword id="KW-0067">ATP-binding</keyword>
<keyword id="KW-0378">Hydrolase</keyword>
<keyword id="KW-0547">Nucleotide-binding</keyword>
<gene>
    <name evidence="1" type="primary">pxpA</name>
    <name type="ordered locus">MAV_0580</name>
</gene>
<reference key="1">
    <citation type="submission" date="2006-10" db="EMBL/GenBank/DDBJ databases">
        <authorList>
            <person name="Fleischmann R.D."/>
            <person name="Dodson R.J."/>
            <person name="Haft D.H."/>
            <person name="Merkel J.S."/>
            <person name="Nelson W.C."/>
            <person name="Fraser C.M."/>
        </authorList>
    </citation>
    <scope>NUCLEOTIDE SEQUENCE [LARGE SCALE GENOMIC DNA]</scope>
    <source>
        <strain>104</strain>
    </source>
</reference>
<name>PXPA_MYCA1</name>
<feature type="chain" id="PRO_1000045209" description="5-oxoprolinase subunit A">
    <location>
        <begin position="1"/>
        <end position="252"/>
    </location>
</feature>
<comment type="function">
    <text evidence="1">Catalyzes the cleavage of 5-oxoproline to form L-glutamate coupled to the hydrolysis of ATP to ADP and inorganic phosphate.</text>
</comment>
<comment type="catalytic activity">
    <reaction evidence="1">
        <text>5-oxo-L-proline + ATP + 2 H2O = L-glutamate + ADP + phosphate + H(+)</text>
        <dbReference type="Rhea" id="RHEA:10348"/>
        <dbReference type="ChEBI" id="CHEBI:15377"/>
        <dbReference type="ChEBI" id="CHEBI:15378"/>
        <dbReference type="ChEBI" id="CHEBI:29985"/>
        <dbReference type="ChEBI" id="CHEBI:30616"/>
        <dbReference type="ChEBI" id="CHEBI:43474"/>
        <dbReference type="ChEBI" id="CHEBI:58402"/>
        <dbReference type="ChEBI" id="CHEBI:456216"/>
        <dbReference type="EC" id="3.5.2.9"/>
    </reaction>
</comment>
<comment type="subunit">
    <text evidence="1">Forms a complex composed of PxpA, PxpB and PxpC.</text>
</comment>
<comment type="similarity">
    <text evidence="1">Belongs to the LamB/PxpA family.</text>
</comment>
<sequence length="252" mass="26077">MAGIDLNADLGEGFGVWRLGDDDAMLGIVSSANVACGFHAGDPAGLLRVCRSAAERGVRVGAQVSYRDLAGFGRRFIDVAADELLADVVYQIGALQAIAHAAGSSVCYVKPHGALYNTIVTHPAQAAAVAEAVRLVDPGLPVLGMAGSVFFDEAARRGLRVVAEAFADRAYRPDGRLVSRREPGAVLADPAAIAERVLAMVETGAVTAVDGTRLALSVESVCVHGDSPGAVQIATAVRDRLRAAGVEIRAFC</sequence>
<protein>
    <recommendedName>
        <fullName evidence="1">5-oxoprolinase subunit A</fullName>
        <shortName evidence="1">5-OPase subunit A</shortName>
        <ecNumber evidence="1">3.5.2.9</ecNumber>
    </recommendedName>
    <alternativeName>
        <fullName evidence="1">5-oxoprolinase (ATP-hydrolyzing) subunit A</fullName>
    </alternativeName>
</protein>
<evidence type="ECO:0000255" key="1">
    <source>
        <dbReference type="HAMAP-Rule" id="MF_00691"/>
    </source>
</evidence>
<organism>
    <name type="scientific">Mycobacterium avium (strain 104)</name>
    <dbReference type="NCBI Taxonomy" id="243243"/>
    <lineage>
        <taxon>Bacteria</taxon>
        <taxon>Bacillati</taxon>
        <taxon>Actinomycetota</taxon>
        <taxon>Actinomycetes</taxon>
        <taxon>Mycobacteriales</taxon>
        <taxon>Mycobacteriaceae</taxon>
        <taxon>Mycobacterium</taxon>
        <taxon>Mycobacterium avium complex (MAC)</taxon>
    </lineage>
</organism>
<proteinExistence type="inferred from homology"/>
<accession>A0QAC2</accession>